<feature type="chain" id="PRO_1000078200" description="Ribonuclease P protein component">
    <location>
        <begin position="1"/>
        <end position="124"/>
    </location>
</feature>
<sequence>MLPAQYRMTRSTEFGATVSRGTRAAQPDLVLYTLRSDETGEPGPRVGLIVSKAVGNAVVRHRVSRRLRHAARGILERLDSRDRVVIRALPRSRDAGTQRFEQELHTALDRIHARTITARNGAPS</sequence>
<organism>
    <name type="scientific">Mycolicibacterium gilvum (strain PYR-GCK)</name>
    <name type="common">Mycobacterium gilvum (strain PYR-GCK)</name>
    <dbReference type="NCBI Taxonomy" id="350054"/>
    <lineage>
        <taxon>Bacteria</taxon>
        <taxon>Bacillati</taxon>
        <taxon>Actinomycetota</taxon>
        <taxon>Actinomycetes</taxon>
        <taxon>Mycobacteriales</taxon>
        <taxon>Mycobacteriaceae</taxon>
        <taxon>Mycolicibacterium</taxon>
    </lineage>
</organism>
<evidence type="ECO:0000255" key="1">
    <source>
        <dbReference type="HAMAP-Rule" id="MF_00227"/>
    </source>
</evidence>
<comment type="function">
    <text evidence="1">RNaseP catalyzes the removal of the 5'-leader sequence from pre-tRNA to produce the mature 5'-terminus. It can also cleave other RNA substrates such as 4.5S RNA. The protein component plays an auxiliary but essential role in vivo by binding to the 5'-leader sequence and broadening the substrate specificity of the ribozyme.</text>
</comment>
<comment type="catalytic activity">
    <reaction evidence="1">
        <text>Endonucleolytic cleavage of RNA, removing 5'-extranucleotides from tRNA precursor.</text>
        <dbReference type="EC" id="3.1.26.5"/>
    </reaction>
</comment>
<comment type="subunit">
    <text evidence="1">Consists of a catalytic RNA component (M1 or rnpB) and a protein subunit.</text>
</comment>
<comment type="similarity">
    <text evidence="1">Belongs to the RnpA family.</text>
</comment>
<accession>A4T4T3</accession>
<keyword id="KW-0255">Endonuclease</keyword>
<keyword id="KW-0378">Hydrolase</keyword>
<keyword id="KW-0540">Nuclease</keyword>
<keyword id="KW-0694">RNA-binding</keyword>
<keyword id="KW-0819">tRNA processing</keyword>
<dbReference type="EC" id="3.1.26.5" evidence="1"/>
<dbReference type="EMBL" id="CP000656">
    <property type="protein sequence ID" value="ABP43313.1"/>
    <property type="molecule type" value="Genomic_DNA"/>
</dbReference>
<dbReference type="SMR" id="A4T4T3"/>
<dbReference type="STRING" id="350054.Mflv_0829"/>
<dbReference type="KEGG" id="mgi:Mflv_0829"/>
<dbReference type="eggNOG" id="COG0594">
    <property type="taxonomic scope" value="Bacteria"/>
</dbReference>
<dbReference type="HOGENOM" id="CLU_117179_4_1_11"/>
<dbReference type="OrthoDB" id="196964at2"/>
<dbReference type="GO" id="GO:0030677">
    <property type="term" value="C:ribonuclease P complex"/>
    <property type="evidence" value="ECO:0007669"/>
    <property type="project" value="TreeGrafter"/>
</dbReference>
<dbReference type="GO" id="GO:0042781">
    <property type="term" value="F:3'-tRNA processing endoribonuclease activity"/>
    <property type="evidence" value="ECO:0007669"/>
    <property type="project" value="TreeGrafter"/>
</dbReference>
<dbReference type="GO" id="GO:0004526">
    <property type="term" value="F:ribonuclease P activity"/>
    <property type="evidence" value="ECO:0007669"/>
    <property type="project" value="UniProtKB-UniRule"/>
</dbReference>
<dbReference type="GO" id="GO:0000049">
    <property type="term" value="F:tRNA binding"/>
    <property type="evidence" value="ECO:0007669"/>
    <property type="project" value="UniProtKB-UniRule"/>
</dbReference>
<dbReference type="GO" id="GO:0001682">
    <property type="term" value="P:tRNA 5'-leader removal"/>
    <property type="evidence" value="ECO:0007669"/>
    <property type="project" value="UniProtKB-UniRule"/>
</dbReference>
<dbReference type="Gene3D" id="3.30.230.10">
    <property type="match status" value="1"/>
</dbReference>
<dbReference type="HAMAP" id="MF_00227">
    <property type="entry name" value="RNase_P"/>
    <property type="match status" value="1"/>
</dbReference>
<dbReference type="InterPro" id="IPR020568">
    <property type="entry name" value="Ribosomal_Su5_D2-typ_SF"/>
</dbReference>
<dbReference type="InterPro" id="IPR014721">
    <property type="entry name" value="Ribsml_uS5_D2-typ_fold_subgr"/>
</dbReference>
<dbReference type="InterPro" id="IPR000100">
    <property type="entry name" value="RNase_P"/>
</dbReference>
<dbReference type="NCBIfam" id="TIGR00188">
    <property type="entry name" value="rnpA"/>
    <property type="match status" value="1"/>
</dbReference>
<dbReference type="PANTHER" id="PTHR33992">
    <property type="entry name" value="RIBONUCLEASE P PROTEIN COMPONENT"/>
    <property type="match status" value="1"/>
</dbReference>
<dbReference type="PANTHER" id="PTHR33992:SF1">
    <property type="entry name" value="RIBONUCLEASE P PROTEIN COMPONENT"/>
    <property type="match status" value="1"/>
</dbReference>
<dbReference type="Pfam" id="PF00825">
    <property type="entry name" value="Ribonuclease_P"/>
    <property type="match status" value="1"/>
</dbReference>
<dbReference type="SUPFAM" id="SSF54211">
    <property type="entry name" value="Ribosomal protein S5 domain 2-like"/>
    <property type="match status" value="1"/>
</dbReference>
<reference key="1">
    <citation type="submission" date="2007-04" db="EMBL/GenBank/DDBJ databases">
        <title>Complete sequence of chromosome of Mycobacterium gilvum PYR-GCK.</title>
        <authorList>
            <consortium name="US DOE Joint Genome Institute"/>
            <person name="Copeland A."/>
            <person name="Lucas S."/>
            <person name="Lapidus A."/>
            <person name="Barry K."/>
            <person name="Detter J.C."/>
            <person name="Glavina del Rio T."/>
            <person name="Hammon N."/>
            <person name="Israni S."/>
            <person name="Dalin E."/>
            <person name="Tice H."/>
            <person name="Pitluck S."/>
            <person name="Chain P."/>
            <person name="Malfatti S."/>
            <person name="Shin M."/>
            <person name="Vergez L."/>
            <person name="Schmutz J."/>
            <person name="Larimer F."/>
            <person name="Land M."/>
            <person name="Hauser L."/>
            <person name="Kyrpides N."/>
            <person name="Mikhailova N."/>
            <person name="Miller C."/>
            <person name="Richardson P."/>
        </authorList>
    </citation>
    <scope>NUCLEOTIDE SEQUENCE [LARGE SCALE GENOMIC DNA]</scope>
    <source>
        <strain>PYR-GCK</strain>
    </source>
</reference>
<gene>
    <name evidence="1" type="primary">rnpA</name>
    <name type="ordered locus">Mflv_0829</name>
</gene>
<name>RNPA_MYCGI</name>
<proteinExistence type="inferred from homology"/>
<protein>
    <recommendedName>
        <fullName evidence="1">Ribonuclease P protein component</fullName>
        <shortName evidence="1">RNase P protein</shortName>
        <shortName evidence="1">RNaseP protein</shortName>
        <ecNumber evidence="1">3.1.26.5</ecNumber>
    </recommendedName>
    <alternativeName>
        <fullName evidence="1">Protein C5</fullName>
    </alternativeName>
</protein>